<proteinExistence type="inferred from homology"/>
<name>SYH_MYCBO</name>
<dbReference type="EC" id="6.1.1.21"/>
<dbReference type="EMBL" id="LT708304">
    <property type="protein sequence ID" value="SIU01229.1"/>
    <property type="molecule type" value="Genomic_DNA"/>
</dbReference>
<dbReference type="RefSeq" id="NP_856257.1">
    <property type="nucleotide sequence ID" value="NC_002945.3"/>
</dbReference>
<dbReference type="RefSeq" id="WP_003413365.1">
    <property type="nucleotide sequence ID" value="NC_002945.4"/>
</dbReference>
<dbReference type="SMR" id="P67484"/>
<dbReference type="GeneID" id="45426582"/>
<dbReference type="KEGG" id="mbo:BQ2027_MB2611C"/>
<dbReference type="PATRIC" id="fig|233413.5.peg.2872"/>
<dbReference type="Proteomes" id="UP000001419">
    <property type="component" value="Chromosome"/>
</dbReference>
<dbReference type="GO" id="GO:0005737">
    <property type="term" value="C:cytoplasm"/>
    <property type="evidence" value="ECO:0007669"/>
    <property type="project" value="UniProtKB-SubCell"/>
</dbReference>
<dbReference type="GO" id="GO:0005524">
    <property type="term" value="F:ATP binding"/>
    <property type="evidence" value="ECO:0007669"/>
    <property type="project" value="UniProtKB-UniRule"/>
</dbReference>
<dbReference type="GO" id="GO:0004821">
    <property type="term" value="F:histidine-tRNA ligase activity"/>
    <property type="evidence" value="ECO:0007669"/>
    <property type="project" value="UniProtKB-UniRule"/>
</dbReference>
<dbReference type="GO" id="GO:0006427">
    <property type="term" value="P:histidyl-tRNA aminoacylation"/>
    <property type="evidence" value="ECO:0007669"/>
    <property type="project" value="UniProtKB-UniRule"/>
</dbReference>
<dbReference type="CDD" id="cd00773">
    <property type="entry name" value="HisRS-like_core"/>
    <property type="match status" value="1"/>
</dbReference>
<dbReference type="CDD" id="cd00859">
    <property type="entry name" value="HisRS_anticodon"/>
    <property type="match status" value="1"/>
</dbReference>
<dbReference type="FunFam" id="3.30.930.10:FF:000005">
    <property type="entry name" value="Histidine--tRNA ligase"/>
    <property type="match status" value="1"/>
</dbReference>
<dbReference type="Gene3D" id="3.40.50.800">
    <property type="entry name" value="Anticodon-binding domain"/>
    <property type="match status" value="1"/>
</dbReference>
<dbReference type="Gene3D" id="3.30.930.10">
    <property type="entry name" value="Bira Bifunctional Protein, Domain 2"/>
    <property type="match status" value="1"/>
</dbReference>
<dbReference type="HAMAP" id="MF_00127">
    <property type="entry name" value="His_tRNA_synth"/>
    <property type="match status" value="1"/>
</dbReference>
<dbReference type="InterPro" id="IPR006195">
    <property type="entry name" value="aa-tRNA-synth_II"/>
</dbReference>
<dbReference type="InterPro" id="IPR045864">
    <property type="entry name" value="aa-tRNA-synth_II/BPL/LPL"/>
</dbReference>
<dbReference type="InterPro" id="IPR004154">
    <property type="entry name" value="Anticodon-bd"/>
</dbReference>
<dbReference type="InterPro" id="IPR036621">
    <property type="entry name" value="Anticodon-bd_dom_sf"/>
</dbReference>
<dbReference type="InterPro" id="IPR015807">
    <property type="entry name" value="His-tRNA-ligase"/>
</dbReference>
<dbReference type="InterPro" id="IPR041715">
    <property type="entry name" value="HisRS-like_core"/>
</dbReference>
<dbReference type="InterPro" id="IPR004516">
    <property type="entry name" value="HisRS/HisZ"/>
</dbReference>
<dbReference type="InterPro" id="IPR033656">
    <property type="entry name" value="HisRS_anticodon"/>
</dbReference>
<dbReference type="NCBIfam" id="TIGR00442">
    <property type="entry name" value="hisS"/>
    <property type="match status" value="1"/>
</dbReference>
<dbReference type="PANTHER" id="PTHR43707:SF1">
    <property type="entry name" value="HISTIDINE--TRNA LIGASE, MITOCHONDRIAL-RELATED"/>
    <property type="match status" value="1"/>
</dbReference>
<dbReference type="PANTHER" id="PTHR43707">
    <property type="entry name" value="HISTIDYL-TRNA SYNTHETASE"/>
    <property type="match status" value="1"/>
</dbReference>
<dbReference type="Pfam" id="PF03129">
    <property type="entry name" value="HGTP_anticodon"/>
    <property type="match status" value="1"/>
</dbReference>
<dbReference type="Pfam" id="PF13393">
    <property type="entry name" value="tRNA-synt_His"/>
    <property type="match status" value="1"/>
</dbReference>
<dbReference type="PIRSF" id="PIRSF001549">
    <property type="entry name" value="His-tRNA_synth"/>
    <property type="match status" value="1"/>
</dbReference>
<dbReference type="SUPFAM" id="SSF52954">
    <property type="entry name" value="Class II aaRS ABD-related"/>
    <property type="match status" value="1"/>
</dbReference>
<dbReference type="SUPFAM" id="SSF55681">
    <property type="entry name" value="Class II aaRS and biotin synthetases"/>
    <property type="match status" value="1"/>
</dbReference>
<dbReference type="PROSITE" id="PS50862">
    <property type="entry name" value="AA_TRNA_LIGASE_II"/>
    <property type="match status" value="1"/>
</dbReference>
<sequence length="423" mass="45149">MTEFSSFSAPKGVPDYVPPDSAQFVAVRDGLLAAARQAGYSHIELPIFEDTALFARGVGESTDVVSKEMYTFADRGDRSVTLRPEGTAGVVRAVIEHGLDRGALPVKLCYAGPFFRYERPQAGRYRQLQQVGVEAIGVDDPALDAEVIAIADAGFRSLGLDGFRLEITSLGDESCRPQYRELLQEFLFGLDLDEDTRRRAGINPLRVLDDKRPELRAMTASAPVLLDHLSDVAKQHFDTVLAHLDALGVPYVINPRMVRGLDYYTKTAFEFVHDGLGAQSGIGGGGRYDGLMHQLGGQDLSGIGFGLGVDRTVLALRAEGKTAGDSARCDVFGVPLGEAAKLRLAVLAGRLRAAGVRVDLAYGDRGLKGAMRAAARSGARVALVAGDRDIEAGTVAVKDLTTGEQVSVSMDSVVAEVISRLAG</sequence>
<protein>
    <recommendedName>
        <fullName>Histidine--tRNA ligase</fullName>
        <ecNumber>6.1.1.21</ecNumber>
    </recommendedName>
    <alternativeName>
        <fullName>Histidyl-tRNA synthetase</fullName>
        <shortName>HisRS</shortName>
    </alternativeName>
</protein>
<comment type="catalytic activity">
    <reaction>
        <text>tRNA(His) + L-histidine + ATP = L-histidyl-tRNA(His) + AMP + diphosphate + H(+)</text>
        <dbReference type="Rhea" id="RHEA:17313"/>
        <dbReference type="Rhea" id="RHEA-COMP:9665"/>
        <dbReference type="Rhea" id="RHEA-COMP:9689"/>
        <dbReference type="ChEBI" id="CHEBI:15378"/>
        <dbReference type="ChEBI" id="CHEBI:30616"/>
        <dbReference type="ChEBI" id="CHEBI:33019"/>
        <dbReference type="ChEBI" id="CHEBI:57595"/>
        <dbReference type="ChEBI" id="CHEBI:78442"/>
        <dbReference type="ChEBI" id="CHEBI:78527"/>
        <dbReference type="ChEBI" id="CHEBI:456215"/>
        <dbReference type="EC" id="6.1.1.21"/>
    </reaction>
</comment>
<comment type="subunit">
    <text evidence="1">Homodimer.</text>
</comment>
<comment type="subcellular location">
    <subcellularLocation>
        <location evidence="1">Cytoplasm</location>
    </subcellularLocation>
</comment>
<comment type="similarity">
    <text evidence="2">Belongs to the class-II aminoacyl-tRNA synthetase family.</text>
</comment>
<evidence type="ECO:0000250" key="1"/>
<evidence type="ECO:0000305" key="2"/>
<reference key="1">
    <citation type="journal article" date="2003" name="Proc. Natl. Acad. Sci. U.S.A.">
        <title>The complete genome sequence of Mycobacterium bovis.</title>
        <authorList>
            <person name="Garnier T."/>
            <person name="Eiglmeier K."/>
            <person name="Camus J.-C."/>
            <person name="Medina N."/>
            <person name="Mansoor H."/>
            <person name="Pryor M."/>
            <person name="Duthoy S."/>
            <person name="Grondin S."/>
            <person name="Lacroix C."/>
            <person name="Monsempe C."/>
            <person name="Simon S."/>
            <person name="Harris B."/>
            <person name="Atkin R."/>
            <person name="Doggett J."/>
            <person name="Mayes R."/>
            <person name="Keating L."/>
            <person name="Wheeler P.R."/>
            <person name="Parkhill J."/>
            <person name="Barrell B.G."/>
            <person name="Cole S.T."/>
            <person name="Gordon S.V."/>
            <person name="Hewinson R.G."/>
        </authorList>
    </citation>
    <scope>NUCLEOTIDE SEQUENCE [LARGE SCALE GENOMIC DNA]</scope>
    <source>
        <strain>ATCC BAA-935 / AF2122/97</strain>
    </source>
</reference>
<reference key="2">
    <citation type="journal article" date="2017" name="Genome Announc.">
        <title>Updated reference genome sequence and annotation of Mycobacterium bovis AF2122/97.</title>
        <authorList>
            <person name="Malone K.M."/>
            <person name="Farrell D."/>
            <person name="Stuber T.P."/>
            <person name="Schubert O.T."/>
            <person name="Aebersold R."/>
            <person name="Robbe-Austerman S."/>
            <person name="Gordon S.V."/>
        </authorList>
    </citation>
    <scope>NUCLEOTIDE SEQUENCE [LARGE SCALE GENOMIC DNA]</scope>
    <scope>GENOME REANNOTATION</scope>
    <source>
        <strain>ATCC BAA-935 / AF2122/97</strain>
    </source>
</reference>
<organism>
    <name type="scientific">Mycobacterium bovis (strain ATCC BAA-935 / AF2122/97)</name>
    <dbReference type="NCBI Taxonomy" id="233413"/>
    <lineage>
        <taxon>Bacteria</taxon>
        <taxon>Bacillati</taxon>
        <taxon>Actinomycetota</taxon>
        <taxon>Actinomycetes</taxon>
        <taxon>Mycobacteriales</taxon>
        <taxon>Mycobacteriaceae</taxon>
        <taxon>Mycobacterium</taxon>
        <taxon>Mycobacterium tuberculosis complex</taxon>
    </lineage>
</organism>
<gene>
    <name type="primary">hisS</name>
    <name type="ordered locus">BQ2027_MB2611C</name>
</gene>
<accession>P67484</accession>
<accession>A0A1R3Y1M0</accession>
<accession>Q50641</accession>
<accession>X2BL97</accession>
<feature type="chain" id="PRO_0000136193" description="Histidine--tRNA ligase">
    <location>
        <begin position="1"/>
        <end position="423"/>
    </location>
</feature>
<keyword id="KW-0030">Aminoacyl-tRNA synthetase</keyword>
<keyword id="KW-0067">ATP-binding</keyword>
<keyword id="KW-0963">Cytoplasm</keyword>
<keyword id="KW-0436">Ligase</keyword>
<keyword id="KW-0547">Nucleotide-binding</keyword>
<keyword id="KW-0648">Protein biosynthesis</keyword>
<keyword id="KW-1185">Reference proteome</keyword>